<gene>
    <name evidence="1" type="primary">pdxB</name>
    <name type="ordered locus">Sbal_2745</name>
</gene>
<accession>A3D669</accession>
<proteinExistence type="inferred from homology"/>
<reference key="1">
    <citation type="submission" date="2007-02" db="EMBL/GenBank/DDBJ databases">
        <title>Complete sequence of chromosome of Shewanella baltica OS155.</title>
        <authorList>
            <consortium name="US DOE Joint Genome Institute"/>
            <person name="Copeland A."/>
            <person name="Lucas S."/>
            <person name="Lapidus A."/>
            <person name="Barry K."/>
            <person name="Detter J.C."/>
            <person name="Glavina del Rio T."/>
            <person name="Hammon N."/>
            <person name="Israni S."/>
            <person name="Dalin E."/>
            <person name="Tice H."/>
            <person name="Pitluck S."/>
            <person name="Sims D.R."/>
            <person name="Brettin T."/>
            <person name="Bruce D."/>
            <person name="Han C."/>
            <person name="Tapia R."/>
            <person name="Brainard J."/>
            <person name="Schmutz J."/>
            <person name="Larimer F."/>
            <person name="Land M."/>
            <person name="Hauser L."/>
            <person name="Kyrpides N."/>
            <person name="Mikhailova N."/>
            <person name="Brettar I."/>
            <person name="Klappenbach J."/>
            <person name="Konstantinidis K."/>
            <person name="Rodrigues J."/>
            <person name="Tiedje J."/>
            <person name="Richardson P."/>
        </authorList>
    </citation>
    <scope>NUCLEOTIDE SEQUENCE [LARGE SCALE GENOMIC DNA]</scope>
    <source>
        <strain>OS155 / ATCC BAA-1091</strain>
    </source>
</reference>
<comment type="function">
    <text evidence="1">Catalyzes the oxidation of erythronate-4-phosphate to 3-hydroxy-2-oxo-4-phosphonooxybutanoate.</text>
</comment>
<comment type="catalytic activity">
    <reaction evidence="1">
        <text>4-phospho-D-erythronate + NAD(+) = (R)-3-hydroxy-2-oxo-4-phosphooxybutanoate + NADH + H(+)</text>
        <dbReference type="Rhea" id="RHEA:18829"/>
        <dbReference type="ChEBI" id="CHEBI:15378"/>
        <dbReference type="ChEBI" id="CHEBI:57540"/>
        <dbReference type="ChEBI" id="CHEBI:57945"/>
        <dbReference type="ChEBI" id="CHEBI:58538"/>
        <dbReference type="ChEBI" id="CHEBI:58766"/>
        <dbReference type="EC" id="1.1.1.290"/>
    </reaction>
</comment>
<comment type="pathway">
    <text evidence="1">Cofactor biosynthesis; pyridoxine 5'-phosphate biosynthesis; pyridoxine 5'-phosphate from D-erythrose 4-phosphate: step 2/5.</text>
</comment>
<comment type="subunit">
    <text evidence="1">Homodimer.</text>
</comment>
<comment type="subcellular location">
    <subcellularLocation>
        <location evidence="1">Cytoplasm</location>
    </subcellularLocation>
</comment>
<comment type="similarity">
    <text evidence="1">Belongs to the D-isomer specific 2-hydroxyacid dehydrogenase family. PdxB subfamily.</text>
</comment>
<name>PDXB_SHEB5</name>
<dbReference type="EC" id="1.1.1.290" evidence="1"/>
<dbReference type="EMBL" id="CP000563">
    <property type="protein sequence ID" value="ABN62232.1"/>
    <property type="molecule type" value="Genomic_DNA"/>
</dbReference>
<dbReference type="RefSeq" id="WP_011847180.1">
    <property type="nucleotide sequence ID" value="NC_009052.1"/>
</dbReference>
<dbReference type="SMR" id="A3D669"/>
<dbReference type="STRING" id="325240.Sbal_2745"/>
<dbReference type="KEGG" id="sbl:Sbal_2745"/>
<dbReference type="HOGENOM" id="CLU_019796_4_0_6"/>
<dbReference type="OrthoDB" id="9770208at2"/>
<dbReference type="UniPathway" id="UPA00244">
    <property type="reaction ID" value="UER00310"/>
</dbReference>
<dbReference type="Proteomes" id="UP000001557">
    <property type="component" value="Chromosome"/>
</dbReference>
<dbReference type="GO" id="GO:0005737">
    <property type="term" value="C:cytoplasm"/>
    <property type="evidence" value="ECO:0007669"/>
    <property type="project" value="UniProtKB-SubCell"/>
</dbReference>
<dbReference type="GO" id="GO:0033711">
    <property type="term" value="F:4-phosphoerythronate dehydrogenase activity"/>
    <property type="evidence" value="ECO:0007669"/>
    <property type="project" value="UniProtKB-EC"/>
</dbReference>
<dbReference type="GO" id="GO:0051287">
    <property type="term" value="F:NAD binding"/>
    <property type="evidence" value="ECO:0007669"/>
    <property type="project" value="InterPro"/>
</dbReference>
<dbReference type="GO" id="GO:0046983">
    <property type="term" value="F:protein dimerization activity"/>
    <property type="evidence" value="ECO:0007669"/>
    <property type="project" value="InterPro"/>
</dbReference>
<dbReference type="GO" id="GO:0008615">
    <property type="term" value="P:pyridoxine biosynthetic process"/>
    <property type="evidence" value="ECO:0007669"/>
    <property type="project" value="UniProtKB-UniRule"/>
</dbReference>
<dbReference type="CDD" id="cd12158">
    <property type="entry name" value="ErythrP_dh"/>
    <property type="match status" value="1"/>
</dbReference>
<dbReference type="FunFam" id="3.40.50.720:FF:000890">
    <property type="entry name" value="Erythronate-4-phosphate dehydrogenase"/>
    <property type="match status" value="1"/>
</dbReference>
<dbReference type="Gene3D" id="3.30.1370.170">
    <property type="match status" value="1"/>
</dbReference>
<dbReference type="Gene3D" id="3.40.50.720">
    <property type="entry name" value="NAD(P)-binding Rossmann-like Domain"/>
    <property type="match status" value="2"/>
</dbReference>
<dbReference type="HAMAP" id="MF_01825">
    <property type="entry name" value="PdxB"/>
    <property type="match status" value="1"/>
</dbReference>
<dbReference type="InterPro" id="IPR050418">
    <property type="entry name" value="D-iso_2-hydroxyacid_DH_PdxB"/>
</dbReference>
<dbReference type="InterPro" id="IPR006139">
    <property type="entry name" value="D-isomer_2_OHA_DH_cat_dom"/>
</dbReference>
<dbReference type="InterPro" id="IPR029753">
    <property type="entry name" value="D-isomer_DH_CS"/>
</dbReference>
<dbReference type="InterPro" id="IPR006140">
    <property type="entry name" value="D-isomer_DH_NAD-bd"/>
</dbReference>
<dbReference type="InterPro" id="IPR020921">
    <property type="entry name" value="Erythronate-4-P_DHase"/>
</dbReference>
<dbReference type="InterPro" id="IPR024531">
    <property type="entry name" value="Erythronate-4-P_DHase_dimer"/>
</dbReference>
<dbReference type="InterPro" id="IPR036291">
    <property type="entry name" value="NAD(P)-bd_dom_sf"/>
</dbReference>
<dbReference type="InterPro" id="IPR038251">
    <property type="entry name" value="PdxB_dimer_sf"/>
</dbReference>
<dbReference type="PANTHER" id="PTHR43761:SF1">
    <property type="entry name" value="D-ISOMER SPECIFIC 2-HYDROXYACID DEHYDROGENASE CATALYTIC DOMAIN-CONTAINING PROTEIN-RELATED"/>
    <property type="match status" value="1"/>
</dbReference>
<dbReference type="PANTHER" id="PTHR43761">
    <property type="entry name" value="D-ISOMER SPECIFIC 2-HYDROXYACID DEHYDROGENASE FAMILY PROTEIN (AFU_ORTHOLOGUE AFUA_1G13630)"/>
    <property type="match status" value="1"/>
</dbReference>
<dbReference type="Pfam" id="PF00389">
    <property type="entry name" value="2-Hacid_dh"/>
    <property type="match status" value="1"/>
</dbReference>
<dbReference type="Pfam" id="PF02826">
    <property type="entry name" value="2-Hacid_dh_C"/>
    <property type="match status" value="1"/>
</dbReference>
<dbReference type="Pfam" id="PF11890">
    <property type="entry name" value="DUF3410"/>
    <property type="match status" value="1"/>
</dbReference>
<dbReference type="SUPFAM" id="SSF52283">
    <property type="entry name" value="Formate/glycerate dehydrogenase catalytic domain-like"/>
    <property type="match status" value="1"/>
</dbReference>
<dbReference type="SUPFAM" id="SSF51735">
    <property type="entry name" value="NAD(P)-binding Rossmann-fold domains"/>
    <property type="match status" value="1"/>
</dbReference>
<dbReference type="PROSITE" id="PS00671">
    <property type="entry name" value="D_2_HYDROXYACID_DH_3"/>
    <property type="match status" value="1"/>
</dbReference>
<organism>
    <name type="scientific">Shewanella baltica (strain OS155 / ATCC BAA-1091)</name>
    <dbReference type="NCBI Taxonomy" id="325240"/>
    <lineage>
        <taxon>Bacteria</taxon>
        <taxon>Pseudomonadati</taxon>
        <taxon>Pseudomonadota</taxon>
        <taxon>Gammaproteobacteria</taxon>
        <taxon>Alteromonadales</taxon>
        <taxon>Shewanellaceae</taxon>
        <taxon>Shewanella</taxon>
    </lineage>
</organism>
<protein>
    <recommendedName>
        <fullName evidence="1">Erythronate-4-phosphate dehydrogenase</fullName>
        <ecNumber evidence="1">1.1.1.290</ecNumber>
    </recommendedName>
</protein>
<evidence type="ECO:0000255" key="1">
    <source>
        <dbReference type="HAMAP-Rule" id="MF_01825"/>
    </source>
</evidence>
<feature type="chain" id="PRO_1000070406" description="Erythronate-4-phosphate dehydrogenase">
    <location>
        <begin position="1"/>
        <end position="376"/>
    </location>
</feature>
<feature type="active site" evidence="1">
    <location>
        <position position="209"/>
    </location>
</feature>
<feature type="active site" evidence="1">
    <location>
        <position position="238"/>
    </location>
</feature>
<feature type="active site" description="Proton donor" evidence="1">
    <location>
        <position position="255"/>
    </location>
</feature>
<feature type="binding site" evidence="1">
    <location>
        <position position="45"/>
    </location>
    <ligand>
        <name>substrate</name>
    </ligand>
</feature>
<feature type="binding site" evidence="1">
    <location>
        <position position="67"/>
    </location>
    <ligand>
        <name>substrate</name>
    </ligand>
</feature>
<feature type="binding site" evidence="1">
    <location>
        <position position="147"/>
    </location>
    <ligand>
        <name>NAD(+)</name>
        <dbReference type="ChEBI" id="CHEBI:57540"/>
    </ligand>
</feature>
<feature type="binding site" evidence="1">
    <location>
        <position position="233"/>
    </location>
    <ligand>
        <name>NAD(+)</name>
        <dbReference type="ChEBI" id="CHEBI:57540"/>
    </ligand>
</feature>
<feature type="binding site" evidence="1">
    <location>
        <position position="258"/>
    </location>
    <ligand>
        <name>NAD(+)</name>
        <dbReference type="ChEBI" id="CHEBI:57540"/>
    </ligand>
</feature>
<feature type="binding site" evidence="1">
    <location>
        <position position="259"/>
    </location>
    <ligand>
        <name>substrate</name>
    </ligand>
</feature>
<sequence length="376" mass="41349">MKILVDENMPYVEPLFGDLGDIIPVNGRTLTAEQVGEADVLLVRSVTKVNAELLSGNNKLKFVGSATIGTDHVDLTYLAERNIPFSNAPGCNATAVGEFAFIAMLELAQRFNSPLKGKVVGIVGAGNTGTATAKCLQAYGIKVLLNDPIKAAEGDPRSFVSLETIMAQADIISLHVPITRTGEHKTKYLFDEARLKALKPNTWLVNCCRGDVIDNQALIKVKQQRDDLKLVLDVWEGEPTPLPELVPLAEFATPHIAGYSLEGKARGTFMLYQKLCQLLNITADKSLLDLLPTFNIKAVELATAPNEKALLQLARFVYDLRDDDKMFRNTFLNENGFDTMRKNHQHRREFSALALAYDGQSEVDWLSNLGFSGVGQ</sequence>
<keyword id="KW-0963">Cytoplasm</keyword>
<keyword id="KW-0520">NAD</keyword>
<keyword id="KW-0560">Oxidoreductase</keyword>
<keyword id="KW-0664">Pyridoxine biosynthesis</keyword>
<keyword id="KW-1185">Reference proteome</keyword>